<evidence type="ECO:0000250" key="1">
    <source>
        <dbReference type="UniProtKB" id="P62500"/>
    </source>
</evidence>
<evidence type="ECO:0000250" key="2">
    <source>
        <dbReference type="UniProtKB" id="Q15714"/>
    </source>
</evidence>
<evidence type="ECO:0000256" key="3">
    <source>
        <dbReference type="SAM" id="MobiDB-lite"/>
    </source>
</evidence>
<evidence type="ECO:0000305" key="4"/>
<evidence type="ECO:0000312" key="5">
    <source>
        <dbReference type="Proteomes" id="UP000233100"/>
    </source>
</evidence>
<feature type="chain" id="PRO_0000285809" description="TSC22 domain family protein 1">
    <location>
        <begin position="1"/>
        <end position="1068"/>
    </location>
</feature>
<feature type="region of interest" description="Required for interaction with TGFBR1 and promotion of TGF-beta signaling" evidence="2">
    <location>
        <begin position="1"/>
        <end position="98"/>
    </location>
</feature>
<feature type="region of interest" description="Disordered" evidence="3">
    <location>
        <begin position="23"/>
        <end position="110"/>
    </location>
</feature>
<feature type="region of interest" description="Disordered" evidence="3">
    <location>
        <begin position="125"/>
        <end position="288"/>
    </location>
</feature>
<feature type="region of interest" description="Disordered" evidence="3">
    <location>
        <begin position="602"/>
        <end position="623"/>
    </location>
</feature>
<feature type="region of interest" description="Leucine-zipper">
    <location>
        <begin position="1000"/>
        <end position="1021"/>
    </location>
</feature>
<feature type="region of interest" description="Disordered" evidence="3">
    <location>
        <begin position="1032"/>
        <end position="1068"/>
    </location>
</feature>
<feature type="compositionally biased region" description="Low complexity" evidence="3">
    <location>
        <begin position="36"/>
        <end position="55"/>
    </location>
</feature>
<feature type="compositionally biased region" description="Pro residues" evidence="3">
    <location>
        <begin position="58"/>
        <end position="70"/>
    </location>
</feature>
<feature type="compositionally biased region" description="Low complexity" evidence="3">
    <location>
        <begin position="84"/>
        <end position="100"/>
    </location>
</feature>
<feature type="compositionally biased region" description="Acidic residues" evidence="3">
    <location>
        <begin position="133"/>
        <end position="142"/>
    </location>
</feature>
<feature type="compositionally biased region" description="Basic residues" evidence="3">
    <location>
        <begin position="216"/>
        <end position="240"/>
    </location>
</feature>
<feature type="compositionally biased region" description="Low complexity" evidence="3">
    <location>
        <begin position="241"/>
        <end position="250"/>
    </location>
</feature>
<feature type="compositionally biased region" description="Polar residues" evidence="3">
    <location>
        <begin position="261"/>
        <end position="271"/>
    </location>
</feature>
<feature type="compositionally biased region" description="Low complexity" evidence="3">
    <location>
        <begin position="272"/>
        <end position="288"/>
    </location>
</feature>
<feature type="compositionally biased region" description="Pro residues" evidence="3">
    <location>
        <begin position="609"/>
        <end position="620"/>
    </location>
</feature>
<feature type="compositionally biased region" description="Low complexity" evidence="3">
    <location>
        <begin position="1039"/>
        <end position="1068"/>
    </location>
</feature>
<feature type="modified residue" description="Phosphoserine" evidence="2">
    <location>
        <position position="263"/>
    </location>
</feature>
<feature type="splice variant" id="VSP_061918" description="In isoform 2." evidence="4">
    <original>MHQPPESTAAAAAAADISARKMAHPAVFPRRGSGSGSASALNAAGTGVGSSATSSEDFPPPSLLQPPPPAASSTSGPQPPPPQSLNLLSQAQLQAQPLAPGGTQMKKKSGFQITSVTPAQISASISSNNSIAEDTESYDDLDESHTEDLSSSEILDVSLSRATDLGEPERSSSEETLNNFQEAETPGAVSPNQPHLPQPHLPHLPQQNVVINGNAHPHHLHHHHHIHHGHHLQHGHHHPSHVAVASASIPGGPPSSPVSRKLSTTGSSDSITPVAPTSAVSSSGSPASVMTNIRAPSTTGGIGISSVTGTSTVNNVNITAVGSLNPNMTSSMLGNANISTSNIPSAASVSVGPGVTSGVNVNILSGMGNGTISSSAAVSSVPNAAAGMTGGSVSSQQQQPTVNTSRFRVVKLDSSSEPFKKGRWTCTEFYEKENAVPATEGVLINKVVETVKQNPIEVTSERESTSGSSVSSSVSTLSHYTESVGSGEMGAPTVVVQQQQQQQQPALQGVTLQQMDFGSTGPQSIPAVSIPQSISQSQISQVQLQSQELSYQQKQSLQPVPLQATMSAATGIQPSPVNVVGVTSALGQQPSISSLAQPQLPYSQAAPPVQTPLPGAPPPQQLQYGQQQPMVSTQMAPGHVKSVTQNPASEYVQQQPILQTAMSSGQPSSAGVGAGTTVIPVAQPQGIQLPVQPTAVPAQPAGASVQPVGQAQAAVSAVPTGSQIANIGQQANIPTAVQQPSTQVPPSVIQQGAPPSSQVVPPAQTGIIHQGVQTSAASLPQQLVIASQSTLLTVPPQPQGVEPVAQGVVSQQLPAVSPLPSVSSISVTSQVSSTGPSGMPSAPANLVPPQNIAQTPATQNGNLVQSVSQSPLIATNINLPLAQQIPLSSTQFSAQSLAQAIGSQIEDARRPAEPSLVGLPQTISGDSGGMSAVSDGSSSSLAASASLFPLKVLPLTTPLVDGEDE</original>
    <variation>MKSQWCRPVAMDLGVYQLRHFSISFLSSLLGTENASVRLDN</variation>
    <location>
        <begin position="1"/>
        <end position="965"/>
    </location>
</feature>
<organism>
    <name type="scientific">Macaca fascicularis</name>
    <name type="common">Crab-eating macaque</name>
    <name type="synonym">Cynomolgus monkey</name>
    <dbReference type="NCBI Taxonomy" id="9541"/>
    <lineage>
        <taxon>Eukaryota</taxon>
        <taxon>Metazoa</taxon>
        <taxon>Chordata</taxon>
        <taxon>Craniata</taxon>
        <taxon>Vertebrata</taxon>
        <taxon>Euteleostomi</taxon>
        <taxon>Mammalia</taxon>
        <taxon>Eutheria</taxon>
        <taxon>Euarchontoglires</taxon>
        <taxon>Primates</taxon>
        <taxon>Haplorrhini</taxon>
        <taxon>Catarrhini</taxon>
        <taxon>Cercopithecidae</taxon>
        <taxon>Cercopithecinae</taxon>
        <taxon>Macaca</taxon>
    </lineage>
</organism>
<accession>Q4R4H5</accession>
<accession>A0A2K5W9M0</accession>
<dbReference type="EMBL" id="AB169919">
    <property type="protein sequence ID" value="BAE02000.1"/>
    <property type="molecule type" value="mRNA"/>
</dbReference>
<dbReference type="RefSeq" id="XP_005585828.1">
    <molecule id="Q4R4H5-2"/>
    <property type="nucleotide sequence ID" value="XM_005585771.4"/>
</dbReference>
<dbReference type="SMR" id="Q4R4H5"/>
<dbReference type="STRING" id="9541.ENSMFAP00000033772"/>
<dbReference type="Ensembl" id="ENSMFAT00000008016.2">
    <molecule id="Q4R4H5-2"/>
    <property type="protein sequence ID" value="ENSMFAP00000033788.2"/>
    <property type="gene ID" value="ENSMFAG00000003381.2"/>
</dbReference>
<dbReference type="Ensembl" id="ENSMFAT00000008018.2">
    <molecule id="Q4R4H5-1"/>
    <property type="protein sequence ID" value="ENSMFAP00000033790.2"/>
    <property type="gene ID" value="ENSMFAG00000003381.2"/>
</dbReference>
<dbReference type="GeneID" id="102118164"/>
<dbReference type="KEGG" id="mcf:102118164"/>
<dbReference type="CTD" id="8848"/>
<dbReference type="VEuPathDB" id="HostDB:ENSMFAG00000003381"/>
<dbReference type="eggNOG" id="KOG4797">
    <property type="taxonomic scope" value="Eukaryota"/>
</dbReference>
<dbReference type="GeneTree" id="ENSGT00940000159144"/>
<dbReference type="Proteomes" id="UP000233100">
    <property type="component" value="Chromosome 17"/>
</dbReference>
<dbReference type="Bgee" id="ENSMFAG00000003381">
    <property type="expression patterns" value="Expressed in frontal cortex and 13 other cell types or tissues"/>
</dbReference>
<dbReference type="GO" id="GO:0005737">
    <property type="term" value="C:cytoplasm"/>
    <property type="evidence" value="ECO:0000250"/>
    <property type="project" value="UniProtKB"/>
</dbReference>
<dbReference type="GO" id="GO:0005829">
    <property type="term" value="C:cytosol"/>
    <property type="evidence" value="ECO:0007669"/>
    <property type="project" value="TreeGrafter"/>
</dbReference>
<dbReference type="GO" id="GO:0005739">
    <property type="term" value="C:mitochondrion"/>
    <property type="evidence" value="ECO:0007669"/>
    <property type="project" value="UniProtKB-SubCell"/>
</dbReference>
<dbReference type="GO" id="GO:0005634">
    <property type="term" value="C:nucleus"/>
    <property type="evidence" value="ECO:0007669"/>
    <property type="project" value="UniProtKB-SubCell"/>
</dbReference>
<dbReference type="GO" id="GO:0005886">
    <property type="term" value="C:plasma membrane"/>
    <property type="evidence" value="ECO:0000250"/>
    <property type="project" value="UniProtKB"/>
</dbReference>
<dbReference type="GO" id="GO:0042802">
    <property type="term" value="F:identical protein binding"/>
    <property type="evidence" value="ECO:0007669"/>
    <property type="project" value="Ensembl"/>
</dbReference>
<dbReference type="GO" id="GO:0003713">
    <property type="term" value="F:transcription coactivator activity"/>
    <property type="evidence" value="ECO:0007669"/>
    <property type="project" value="Ensembl"/>
</dbReference>
<dbReference type="GO" id="GO:0043066">
    <property type="term" value="P:negative regulation of apoptotic process"/>
    <property type="evidence" value="ECO:0007669"/>
    <property type="project" value="TreeGrafter"/>
</dbReference>
<dbReference type="GO" id="GO:1902034">
    <property type="term" value="P:negative regulation of hematopoietic stem cell proliferation"/>
    <property type="evidence" value="ECO:0000250"/>
    <property type="project" value="UniProtKB"/>
</dbReference>
<dbReference type="GO" id="GO:0043069">
    <property type="term" value="P:negative regulation of programmed cell death"/>
    <property type="evidence" value="ECO:0000250"/>
    <property type="project" value="UniProtKB"/>
</dbReference>
<dbReference type="GO" id="GO:0043065">
    <property type="term" value="P:positive regulation of apoptotic process"/>
    <property type="evidence" value="ECO:0000250"/>
    <property type="project" value="UniProtKB"/>
</dbReference>
<dbReference type="GO" id="GO:0008284">
    <property type="term" value="P:positive regulation of cell population proliferation"/>
    <property type="evidence" value="ECO:0007669"/>
    <property type="project" value="TreeGrafter"/>
</dbReference>
<dbReference type="GO" id="GO:0043068">
    <property type="term" value="P:positive regulation of programmed cell death"/>
    <property type="evidence" value="ECO:0000250"/>
    <property type="project" value="UniProtKB"/>
</dbReference>
<dbReference type="GO" id="GO:0030511">
    <property type="term" value="P:positive regulation of transforming growth factor beta receptor signaling pathway"/>
    <property type="evidence" value="ECO:0000250"/>
    <property type="project" value="UniProtKB"/>
</dbReference>
<dbReference type="GO" id="GO:0006357">
    <property type="term" value="P:regulation of transcription by RNA polymerase II"/>
    <property type="evidence" value="ECO:0007669"/>
    <property type="project" value="InterPro"/>
</dbReference>
<dbReference type="CDD" id="cd21938">
    <property type="entry name" value="ZIP_TSC22D1"/>
    <property type="match status" value="1"/>
</dbReference>
<dbReference type="FunFam" id="1.20.5.490:FF:000002">
    <property type="entry name" value="TSC22 domain family, member 1"/>
    <property type="match status" value="1"/>
</dbReference>
<dbReference type="Gene3D" id="1.20.5.490">
    <property type="entry name" value="Single helix bin"/>
    <property type="match status" value="1"/>
</dbReference>
<dbReference type="InterPro" id="IPR000580">
    <property type="entry name" value="TSC22/Bun"/>
</dbReference>
<dbReference type="InterPro" id="IPR047862">
    <property type="entry name" value="TSC22/BUN_CS"/>
</dbReference>
<dbReference type="PANTHER" id="PTHR46745">
    <property type="entry name" value="TSC22 DOMAIN FAMILY PROTEIN 1"/>
    <property type="match status" value="1"/>
</dbReference>
<dbReference type="PANTHER" id="PTHR46745:SF1">
    <property type="entry name" value="TSC22 DOMAIN FAMILY PROTEIN 1"/>
    <property type="match status" value="1"/>
</dbReference>
<dbReference type="Pfam" id="PF01166">
    <property type="entry name" value="TSC22"/>
    <property type="match status" value="1"/>
</dbReference>
<dbReference type="SUPFAM" id="SSF58026">
    <property type="entry name" value="Delta-sleep-inducing peptide immunoreactive peptide"/>
    <property type="match status" value="1"/>
</dbReference>
<dbReference type="PROSITE" id="PS01289">
    <property type="entry name" value="TSC22"/>
    <property type="match status" value="1"/>
</dbReference>
<keyword id="KW-0025">Alternative splicing</keyword>
<keyword id="KW-1003">Cell membrane</keyword>
<keyword id="KW-0963">Cytoplasm</keyword>
<keyword id="KW-0472">Membrane</keyword>
<keyword id="KW-0496">Mitochondrion</keyword>
<keyword id="KW-0539">Nucleus</keyword>
<keyword id="KW-0597">Phosphoprotein</keyword>
<keyword id="KW-1185">Reference proteome</keyword>
<keyword id="KW-0678">Repressor</keyword>
<keyword id="KW-0804">Transcription</keyword>
<keyword id="KW-0805">Transcription regulation</keyword>
<proteinExistence type="evidence at transcript level"/>
<gene>
    <name evidence="2" type="primary">TSC22D1</name>
    <name type="ORF">QccE-12168</name>
</gene>
<protein>
    <recommendedName>
        <fullName evidence="2">TSC22 domain family protein 1</fullName>
    </recommendedName>
</protein>
<reference evidence="5" key="1">
    <citation type="submission" date="2013-03" db="EMBL/GenBank/DDBJ databases">
        <authorList>
            <person name="Warren W."/>
            <person name="Wilson R.K."/>
        </authorList>
    </citation>
    <scope>NUCLEOTIDE SEQUENCE [LARGE SCALE GENOMIC DNA]</scope>
</reference>
<reference key="2">
    <citation type="submission" date="2005-06" db="EMBL/GenBank/DDBJ databases">
        <title>DNA sequences of macaque genes expressed in brain or testis and its evolutionary implications.</title>
        <authorList>
            <consortium name="International consortium for macaque cDNA sequencing and analysis"/>
        </authorList>
    </citation>
    <scope>NUCLEOTIDE SEQUENCE [LARGE SCALE MRNA] (ISOFORM 2)</scope>
    <source>
        <tissue>Brain cortex</tissue>
    </source>
</reference>
<name>T22D1_MACFA</name>
<comment type="function">
    <text evidence="1 2">Transcriptional repressor (By similarity). Acts on the C-type natriuretic peptide (CNP) promoter (By similarity). Acts to promote CASP3-mediated apoptosis (By similarity). Positively regulates TGF-beta signaling by interacting with SMAD7 which inhibits binding of SMAD7 to TGFBR1, preventing recruitment of SMURF ubiquitin ligases to TGFBR1 and inhibiting SMURF-mediated ubiquitination and degradation of TGFBR1 (By similarity). Contributes to enhancement of TGF-beta signaling by binding to and modulating the transcription activator activity of SMAD4 (By similarity). Promotes TGF-beta-induced transcription of COL1A2; via its interaction with TFE3 at E-boxes in the gene proximal promoter (By similarity). Plays a role in the repression of hematopoietic precursor cell growth (By similarity). Promotes IL2 deprivation-induced apoptosis in T-lymphocytes, via repression of TSC22D3/GILZ transcription and activation of the caspase cascade (By similarity).</text>
</comment>
<comment type="function">
    <molecule>Isoform 1</molecule>
    <text evidence="1">May act to negatively regulate TGFB3 signaling and thereby inhibit cell death in mammary gland cells.</text>
</comment>
<comment type="function">
    <molecule>Isoform 2</molecule>
    <text evidence="1">Positively regulates cell death in response to TGFB3 during mammary gland involution.</text>
</comment>
<comment type="subunit">
    <text evidence="1 2">Forms homodimers (By similarity). Forms heterodimers (By similarity). Component of a complex composed of TSC22D1 (via N-terminus), TGFBR1 and TGFBR2; the interaction between TSC22D1 and TGFBR1 is inhibited by SMAD7 and promoted by TGFB1 (By similarity). Interacts with SMAD7; the interaction requires TGF-beta and the interaction is inhibited by TGFBR1 (By similarity). Interacts with TPT1/fortilin; interaction results in the destabilization of TSC22D1 protein and prevents TSC22D1-mediated apoptosis (By similarity). Interacts with SMAD4 (via N-terminus) (By similarity). Interacts with ACVRL1/ALK1, ACVR1/ALK2, BMPR1A/ALK3, ACVR1B/ALK4, BMPR1B/ALK6, ACVR2A/ACTRII, and BMPR2 (By similarity). Interacts with SMAD6 (By similarity). Interacts with TFE3; the interaction is enhanced in the presence of TGF-beta (By similarity).</text>
</comment>
<comment type="subunit">
    <molecule>Isoform 1</molecule>
    <text evidence="2">Forms a heterodimer with TSC22D4/THG1.</text>
</comment>
<comment type="subunit">
    <molecule>Isoform 2</molecule>
    <text evidence="2">Forms a heterodimer with TSC22D4/THG1 (By similarity). Interacts with histone H1-2 (By similarity). Interacts with GNL3 (By similarity).</text>
</comment>
<comment type="subcellular location">
    <subcellularLocation>
        <location evidence="1">Cytoplasm</location>
    </subcellularLocation>
    <subcellularLocation>
        <location evidence="1">Nucleus</location>
    </subcellularLocation>
    <subcellularLocation>
        <location evidence="2">Cell membrane</location>
        <topology evidence="4">Peripheral membrane protein</topology>
    </subcellularLocation>
    <subcellularLocation>
        <location evidence="2">Mitochondrion</location>
    </subcellularLocation>
</comment>
<comment type="subcellular location">
    <molecule>Isoform 1</molecule>
    <subcellularLocation>
        <location evidence="2">Cytoplasm</location>
    </subcellularLocation>
    <subcellularLocation>
        <location evidence="2">Nucleus</location>
    </subcellularLocation>
    <subcellularLocation>
        <location evidence="2">Mitochondrion</location>
    </subcellularLocation>
</comment>
<comment type="subcellular location">
    <molecule>Isoform 2</molecule>
    <subcellularLocation>
        <location evidence="2">Cytoplasm</location>
    </subcellularLocation>
    <subcellularLocation>
        <location evidence="2">Nucleus</location>
    </subcellularLocation>
    <subcellularLocation>
        <location evidence="2">Mitochondrion</location>
    </subcellularLocation>
</comment>
<comment type="alternative products">
    <event type="alternative splicing"/>
    <isoform>
        <id>Q4R4H5-1</id>
        <name>1</name>
        <sequence type="displayed"/>
    </isoform>
    <isoform>
        <id>Q4R4H5-2</id>
        <name>2</name>
        <sequence type="described" ref="VSP_061918"/>
    </isoform>
</comment>
<comment type="similarity">
    <text evidence="4">Belongs to the TSC-22/Dip/Bun family.</text>
</comment>
<sequence length="1068" mass="109008">MHQPPESTAAAAAAADISARKMAHPAVFPRRGSGSGSASALNAAGTGVGSSATSSEDFPPPSLLQPPPPAASSTSGPQPPPPQSLNLLSQAQLQAQPLAPGGTQMKKKSGFQITSVTPAQISASISSNNSIAEDTESYDDLDESHTEDLSSSEILDVSLSRATDLGEPERSSSEETLNNFQEAETPGAVSPNQPHLPQPHLPHLPQQNVVINGNAHPHHLHHHHHIHHGHHLQHGHHHPSHVAVASASIPGGPPSSPVSRKLSTTGSSDSITPVAPTSAVSSSGSPASVMTNIRAPSTTGGIGISSVTGTSTVNNVNITAVGSLNPNMTSSMLGNANISTSNIPSAASVSVGPGVTSGVNVNILSGMGNGTISSSAAVSSVPNAAAGMTGGSVSSQQQQPTVNTSRFRVVKLDSSSEPFKKGRWTCTEFYEKENAVPATEGVLINKVVETVKQNPIEVTSERESTSGSSVSSSVSTLSHYTESVGSGEMGAPTVVVQQQQQQQQPALQGVTLQQMDFGSTGPQSIPAVSIPQSISQSQISQVQLQSQELSYQQKQSLQPVPLQATMSAATGIQPSPVNVVGVTSALGQQPSISSLAQPQLPYSQAAPPVQTPLPGAPPPQQLQYGQQQPMVSTQMAPGHVKSVTQNPASEYVQQQPILQTAMSSGQPSSAGVGAGTTVIPVAQPQGIQLPVQPTAVPAQPAGASVQPVGQAQAAVSAVPTGSQIANIGQQANIPTAVQQPSTQVPPSVIQQGAPPSSQVVPPAQTGIIHQGVQTSAASLPQQLVIASQSTLLTVPPQPQGVEPVAQGVVSQQLPAVSPLPSVSSISVTSQVSSTGPSGMPSAPANLVPPQNIAQTPATQNGNLVQSVSQSPLIATNINLPLAQQIPLSSTQFSAQSLAQAIGSQIEDARRPAEPSLVGLPQTISGDSGGMSAVSDGSSSSLAASASLFPLKVLPLTTPLVDGEDESSSGASVVAIDNKIEQAMDLVKSHLMYAVREEVEVLKEQIKELIEKNSQLEQENNLLKTLASPEQLAQFQAQLQTGSPPATTQPQGTTQPPAQPASQGSGPTA</sequence>